<proteinExistence type="inferred from homology"/>
<reference key="1">
    <citation type="journal article" date="2008" name="Genomics">
        <title>Characterization of ST-4821 complex, a unique Neisseria meningitidis clone.</title>
        <authorList>
            <person name="Peng J."/>
            <person name="Yang L."/>
            <person name="Yang F."/>
            <person name="Yang J."/>
            <person name="Yan Y."/>
            <person name="Nie H."/>
            <person name="Zhang X."/>
            <person name="Xiong Z."/>
            <person name="Jiang Y."/>
            <person name="Cheng F."/>
            <person name="Xu X."/>
            <person name="Chen S."/>
            <person name="Sun L."/>
            <person name="Li W."/>
            <person name="Shen Y."/>
            <person name="Shao Z."/>
            <person name="Liang X."/>
            <person name="Xu J."/>
            <person name="Jin Q."/>
        </authorList>
    </citation>
    <scope>NUCLEOTIDE SEQUENCE [LARGE SCALE GENOMIC DNA]</scope>
    <source>
        <strain>053442</strain>
    </source>
</reference>
<sequence>MKTNLLNYDLQGLTRHFADTGEKPFRAKQVMRWMHQSGAQNFNEMTDLAKSLRHKLNEQASIEIPKLMMSQESSDGTRKWLLDVGTGNGVETVFIPESDRGTLCISSQVGCALECTFCSTGRQGFNRNLTAAEIIGQLWWANKAMGVTPKNERVISNVVMMGMGEPMANFDNVVTALSIMLDDHGYGLSRRRVTVSTSGMVPQMDRLRDVMPVALAVSLHASNDEVRNQIVPLNKKYPLKELMAACQRYLVKAPRDFITFEYVMLDGINDRAQHARELIELVKDVPCKFNLIPFNPFPNSGYERSSNENIRVFRDILQQAGFVVTVRKTRGDDIDAACGQLAGQVQDKTRRQQKWQQILIGQQG</sequence>
<feature type="chain" id="PRO_0000350279" description="Dual-specificity RNA methyltransferase RlmN">
    <location>
        <begin position="1"/>
        <end position="364"/>
    </location>
</feature>
<feature type="domain" description="Radical SAM core" evidence="2">
    <location>
        <begin position="97"/>
        <end position="333"/>
    </location>
</feature>
<feature type="active site" description="Proton acceptor" evidence="1">
    <location>
        <position position="91"/>
    </location>
</feature>
<feature type="active site" description="S-methylcysteine intermediate" evidence="1">
    <location>
        <position position="338"/>
    </location>
</feature>
<feature type="binding site" evidence="1">
    <location>
        <position position="111"/>
    </location>
    <ligand>
        <name>[4Fe-4S] cluster</name>
        <dbReference type="ChEBI" id="CHEBI:49883"/>
        <note>4Fe-4S-S-AdoMet</note>
    </ligand>
</feature>
<feature type="binding site" evidence="1">
    <location>
        <position position="115"/>
    </location>
    <ligand>
        <name>[4Fe-4S] cluster</name>
        <dbReference type="ChEBI" id="CHEBI:49883"/>
        <note>4Fe-4S-S-AdoMet</note>
    </ligand>
</feature>
<feature type="binding site" evidence="1">
    <location>
        <position position="118"/>
    </location>
    <ligand>
        <name>[4Fe-4S] cluster</name>
        <dbReference type="ChEBI" id="CHEBI:49883"/>
        <note>4Fe-4S-S-AdoMet</note>
    </ligand>
</feature>
<feature type="binding site" evidence="1">
    <location>
        <begin position="164"/>
        <end position="165"/>
    </location>
    <ligand>
        <name>S-adenosyl-L-methionine</name>
        <dbReference type="ChEBI" id="CHEBI:59789"/>
    </ligand>
</feature>
<feature type="binding site" evidence="1">
    <location>
        <position position="196"/>
    </location>
    <ligand>
        <name>S-adenosyl-L-methionine</name>
        <dbReference type="ChEBI" id="CHEBI:59789"/>
    </ligand>
</feature>
<feature type="binding site" evidence="1">
    <location>
        <begin position="218"/>
        <end position="220"/>
    </location>
    <ligand>
        <name>S-adenosyl-L-methionine</name>
        <dbReference type="ChEBI" id="CHEBI:59789"/>
    </ligand>
</feature>
<feature type="binding site" evidence="1">
    <location>
        <position position="295"/>
    </location>
    <ligand>
        <name>S-adenosyl-L-methionine</name>
        <dbReference type="ChEBI" id="CHEBI:59789"/>
    </ligand>
</feature>
<feature type="disulfide bond" description="(transient)" evidence="1">
    <location>
        <begin position="104"/>
        <end position="338"/>
    </location>
</feature>
<comment type="function">
    <text evidence="1">Specifically methylates position 2 of adenine 2503 in 23S rRNA and position 2 of adenine 37 in tRNAs. m2A2503 modification seems to play a crucial role in the proofreading step occurring at the peptidyl transferase center and thus would serve to optimize ribosomal fidelity.</text>
</comment>
<comment type="catalytic activity">
    <reaction evidence="1">
        <text>adenosine(2503) in 23S rRNA + 2 reduced [2Fe-2S]-[ferredoxin] + 2 S-adenosyl-L-methionine = 2-methyladenosine(2503) in 23S rRNA + 5'-deoxyadenosine + L-methionine + 2 oxidized [2Fe-2S]-[ferredoxin] + S-adenosyl-L-homocysteine</text>
        <dbReference type="Rhea" id="RHEA:42916"/>
        <dbReference type="Rhea" id="RHEA-COMP:10000"/>
        <dbReference type="Rhea" id="RHEA-COMP:10001"/>
        <dbReference type="Rhea" id="RHEA-COMP:10152"/>
        <dbReference type="Rhea" id="RHEA-COMP:10282"/>
        <dbReference type="ChEBI" id="CHEBI:17319"/>
        <dbReference type="ChEBI" id="CHEBI:33737"/>
        <dbReference type="ChEBI" id="CHEBI:33738"/>
        <dbReference type="ChEBI" id="CHEBI:57844"/>
        <dbReference type="ChEBI" id="CHEBI:57856"/>
        <dbReference type="ChEBI" id="CHEBI:59789"/>
        <dbReference type="ChEBI" id="CHEBI:74411"/>
        <dbReference type="ChEBI" id="CHEBI:74497"/>
        <dbReference type="EC" id="2.1.1.192"/>
    </reaction>
</comment>
<comment type="catalytic activity">
    <reaction evidence="1">
        <text>adenosine(37) in tRNA + 2 reduced [2Fe-2S]-[ferredoxin] + 2 S-adenosyl-L-methionine = 2-methyladenosine(37) in tRNA + 5'-deoxyadenosine + L-methionine + 2 oxidized [2Fe-2S]-[ferredoxin] + S-adenosyl-L-homocysteine</text>
        <dbReference type="Rhea" id="RHEA:43332"/>
        <dbReference type="Rhea" id="RHEA-COMP:10000"/>
        <dbReference type="Rhea" id="RHEA-COMP:10001"/>
        <dbReference type="Rhea" id="RHEA-COMP:10162"/>
        <dbReference type="Rhea" id="RHEA-COMP:10485"/>
        <dbReference type="ChEBI" id="CHEBI:17319"/>
        <dbReference type="ChEBI" id="CHEBI:33737"/>
        <dbReference type="ChEBI" id="CHEBI:33738"/>
        <dbReference type="ChEBI" id="CHEBI:57844"/>
        <dbReference type="ChEBI" id="CHEBI:57856"/>
        <dbReference type="ChEBI" id="CHEBI:59789"/>
        <dbReference type="ChEBI" id="CHEBI:74411"/>
        <dbReference type="ChEBI" id="CHEBI:74497"/>
        <dbReference type="EC" id="2.1.1.192"/>
    </reaction>
</comment>
<comment type="cofactor">
    <cofactor evidence="1">
        <name>[4Fe-4S] cluster</name>
        <dbReference type="ChEBI" id="CHEBI:49883"/>
    </cofactor>
    <text evidence="1">Binds 1 [4Fe-4S] cluster. The cluster is coordinated with 3 cysteines and an exchangeable S-adenosyl-L-methionine.</text>
</comment>
<comment type="subcellular location">
    <subcellularLocation>
        <location evidence="1">Cytoplasm</location>
    </subcellularLocation>
</comment>
<comment type="miscellaneous">
    <text evidence="1">Reaction proceeds by a ping-pong mechanism involving intermediate methylation of a conserved cysteine residue.</text>
</comment>
<comment type="similarity">
    <text evidence="1">Belongs to the radical SAM superfamily. RlmN family.</text>
</comment>
<protein>
    <recommendedName>
        <fullName evidence="1">Dual-specificity RNA methyltransferase RlmN</fullName>
        <ecNumber evidence="1">2.1.1.192</ecNumber>
    </recommendedName>
    <alternativeName>
        <fullName evidence="1">23S rRNA (adenine(2503)-C(2))-methyltransferase</fullName>
    </alternativeName>
    <alternativeName>
        <fullName evidence="1">23S rRNA m2A2503 methyltransferase</fullName>
    </alternativeName>
    <alternativeName>
        <fullName evidence="1">Ribosomal RNA large subunit methyltransferase N</fullName>
    </alternativeName>
    <alternativeName>
        <fullName evidence="1">tRNA (adenine(37)-C(2))-methyltransferase</fullName>
    </alternativeName>
    <alternativeName>
        <fullName evidence="1">tRNA m2A37 methyltransferase</fullName>
    </alternativeName>
</protein>
<keyword id="KW-0004">4Fe-4S</keyword>
<keyword id="KW-0963">Cytoplasm</keyword>
<keyword id="KW-1015">Disulfide bond</keyword>
<keyword id="KW-0408">Iron</keyword>
<keyword id="KW-0411">Iron-sulfur</keyword>
<keyword id="KW-0479">Metal-binding</keyword>
<keyword id="KW-0489">Methyltransferase</keyword>
<keyword id="KW-0698">rRNA processing</keyword>
<keyword id="KW-0949">S-adenosyl-L-methionine</keyword>
<keyword id="KW-0808">Transferase</keyword>
<keyword id="KW-0819">tRNA processing</keyword>
<name>RLMN_NEIM0</name>
<gene>
    <name evidence="1" type="primary">rlmN</name>
    <name type="ordered locus">NMCC_1221</name>
</gene>
<evidence type="ECO:0000255" key="1">
    <source>
        <dbReference type="HAMAP-Rule" id="MF_01849"/>
    </source>
</evidence>
<evidence type="ECO:0000255" key="2">
    <source>
        <dbReference type="PROSITE-ProRule" id="PRU01266"/>
    </source>
</evidence>
<accession>A9LZN6</accession>
<dbReference type="EC" id="2.1.1.192" evidence="1"/>
<dbReference type="EMBL" id="CP000381">
    <property type="protein sequence ID" value="ABX73394.1"/>
    <property type="molecule type" value="Genomic_DNA"/>
</dbReference>
<dbReference type="RefSeq" id="WP_012221731.1">
    <property type="nucleotide sequence ID" value="NC_010120.1"/>
</dbReference>
<dbReference type="SMR" id="A9LZN6"/>
<dbReference type="KEGG" id="nmn:NMCC_1221"/>
<dbReference type="HOGENOM" id="CLU_029101_0_0_4"/>
<dbReference type="Proteomes" id="UP000001177">
    <property type="component" value="Chromosome"/>
</dbReference>
<dbReference type="GO" id="GO:0005737">
    <property type="term" value="C:cytoplasm"/>
    <property type="evidence" value="ECO:0007669"/>
    <property type="project" value="UniProtKB-SubCell"/>
</dbReference>
<dbReference type="GO" id="GO:0051539">
    <property type="term" value="F:4 iron, 4 sulfur cluster binding"/>
    <property type="evidence" value="ECO:0007669"/>
    <property type="project" value="UniProtKB-UniRule"/>
</dbReference>
<dbReference type="GO" id="GO:0046872">
    <property type="term" value="F:metal ion binding"/>
    <property type="evidence" value="ECO:0007669"/>
    <property type="project" value="UniProtKB-KW"/>
</dbReference>
<dbReference type="GO" id="GO:0070040">
    <property type="term" value="F:rRNA (adenine(2503)-C2-)-methyltransferase activity"/>
    <property type="evidence" value="ECO:0007669"/>
    <property type="project" value="UniProtKB-UniRule"/>
</dbReference>
<dbReference type="GO" id="GO:0019843">
    <property type="term" value="F:rRNA binding"/>
    <property type="evidence" value="ECO:0007669"/>
    <property type="project" value="UniProtKB-UniRule"/>
</dbReference>
<dbReference type="GO" id="GO:0002935">
    <property type="term" value="F:tRNA (adenine(37)-C2)-methyltransferase activity"/>
    <property type="evidence" value="ECO:0007669"/>
    <property type="project" value="UniProtKB-UniRule"/>
</dbReference>
<dbReference type="GO" id="GO:0000049">
    <property type="term" value="F:tRNA binding"/>
    <property type="evidence" value="ECO:0007669"/>
    <property type="project" value="UniProtKB-UniRule"/>
</dbReference>
<dbReference type="GO" id="GO:0070475">
    <property type="term" value="P:rRNA base methylation"/>
    <property type="evidence" value="ECO:0007669"/>
    <property type="project" value="UniProtKB-UniRule"/>
</dbReference>
<dbReference type="GO" id="GO:0030488">
    <property type="term" value="P:tRNA methylation"/>
    <property type="evidence" value="ECO:0007669"/>
    <property type="project" value="UniProtKB-UniRule"/>
</dbReference>
<dbReference type="CDD" id="cd01335">
    <property type="entry name" value="Radical_SAM"/>
    <property type="match status" value="1"/>
</dbReference>
<dbReference type="FunFam" id="1.10.150.530:FF:000003">
    <property type="entry name" value="Dual-specificity RNA methyltransferase RlmN"/>
    <property type="match status" value="1"/>
</dbReference>
<dbReference type="FunFam" id="3.20.20.70:FF:000008">
    <property type="entry name" value="Dual-specificity RNA methyltransferase RlmN"/>
    <property type="match status" value="1"/>
</dbReference>
<dbReference type="Gene3D" id="1.10.150.530">
    <property type="match status" value="1"/>
</dbReference>
<dbReference type="Gene3D" id="3.20.20.70">
    <property type="entry name" value="Aldolase class I"/>
    <property type="match status" value="1"/>
</dbReference>
<dbReference type="HAMAP" id="MF_01849">
    <property type="entry name" value="RNA_methyltr_RlmN"/>
    <property type="match status" value="1"/>
</dbReference>
<dbReference type="InterPro" id="IPR013785">
    <property type="entry name" value="Aldolase_TIM"/>
</dbReference>
<dbReference type="InterPro" id="IPR040072">
    <property type="entry name" value="Methyltransferase_A"/>
</dbReference>
<dbReference type="InterPro" id="IPR048641">
    <property type="entry name" value="RlmN_N"/>
</dbReference>
<dbReference type="InterPro" id="IPR027492">
    <property type="entry name" value="RNA_MTrfase_RlmN"/>
</dbReference>
<dbReference type="InterPro" id="IPR004383">
    <property type="entry name" value="rRNA_lsu_MTrfase_RlmN/Cfr"/>
</dbReference>
<dbReference type="InterPro" id="IPR007197">
    <property type="entry name" value="rSAM"/>
</dbReference>
<dbReference type="NCBIfam" id="TIGR00048">
    <property type="entry name" value="rRNA_mod_RlmN"/>
    <property type="match status" value="1"/>
</dbReference>
<dbReference type="PANTHER" id="PTHR30544">
    <property type="entry name" value="23S RRNA METHYLTRANSFERASE"/>
    <property type="match status" value="1"/>
</dbReference>
<dbReference type="PANTHER" id="PTHR30544:SF5">
    <property type="entry name" value="RADICAL SAM CORE DOMAIN-CONTAINING PROTEIN"/>
    <property type="match status" value="1"/>
</dbReference>
<dbReference type="Pfam" id="PF04055">
    <property type="entry name" value="Radical_SAM"/>
    <property type="match status" value="1"/>
</dbReference>
<dbReference type="Pfam" id="PF21016">
    <property type="entry name" value="RlmN_N"/>
    <property type="match status" value="1"/>
</dbReference>
<dbReference type="PIRSF" id="PIRSF006004">
    <property type="entry name" value="CHP00048"/>
    <property type="match status" value="1"/>
</dbReference>
<dbReference type="SFLD" id="SFLDF00275">
    <property type="entry name" value="adenosine_C2_methyltransferase"/>
    <property type="match status" value="1"/>
</dbReference>
<dbReference type="SFLD" id="SFLDS00029">
    <property type="entry name" value="Radical_SAM"/>
    <property type="match status" value="1"/>
</dbReference>
<dbReference type="SUPFAM" id="SSF102114">
    <property type="entry name" value="Radical SAM enzymes"/>
    <property type="match status" value="1"/>
</dbReference>
<dbReference type="PROSITE" id="PS51918">
    <property type="entry name" value="RADICAL_SAM"/>
    <property type="match status" value="1"/>
</dbReference>
<organism>
    <name type="scientific">Neisseria meningitidis serogroup C (strain 053442)</name>
    <dbReference type="NCBI Taxonomy" id="374833"/>
    <lineage>
        <taxon>Bacteria</taxon>
        <taxon>Pseudomonadati</taxon>
        <taxon>Pseudomonadota</taxon>
        <taxon>Betaproteobacteria</taxon>
        <taxon>Neisseriales</taxon>
        <taxon>Neisseriaceae</taxon>
        <taxon>Neisseria</taxon>
    </lineage>
</organism>